<protein>
    <recommendedName>
        <fullName evidence="1">Ferredoxin--NADP reductase</fullName>
        <shortName evidence="1">FNR</shortName>
        <shortName evidence="1">Fd-NADP(+) reductase</shortName>
        <ecNumber evidence="1">1.18.1.2</ecNumber>
    </recommendedName>
</protein>
<reference key="1">
    <citation type="journal article" date="2002" name="Proc. Natl. Acad. Sci. U.S.A.">
        <title>Genome sequence and comparative microarray analysis of serotype M18 group A Streptococcus strains associated with acute rheumatic fever outbreaks.</title>
        <authorList>
            <person name="Smoot J.C."/>
            <person name="Barbian K.D."/>
            <person name="Van Gompel J.J."/>
            <person name="Smoot L.M."/>
            <person name="Chaussee M.S."/>
            <person name="Sylva G.L."/>
            <person name="Sturdevant D.E."/>
            <person name="Ricklefs S.M."/>
            <person name="Porcella S.F."/>
            <person name="Parkins L.D."/>
            <person name="Beres S.B."/>
            <person name="Campbell D.S."/>
            <person name="Smith T.M."/>
            <person name="Zhang Q."/>
            <person name="Kapur V."/>
            <person name="Daly J.A."/>
            <person name="Veasy L.G."/>
            <person name="Musser J.M."/>
        </authorList>
    </citation>
    <scope>NUCLEOTIDE SEQUENCE [LARGE SCALE GENOMIC DNA]</scope>
    <source>
        <strain>MGAS8232</strain>
    </source>
</reference>
<dbReference type="EC" id="1.18.1.2" evidence="1"/>
<dbReference type="EMBL" id="AE009949">
    <property type="protein sequence ID" value="AAL97559.1"/>
    <property type="molecule type" value="Genomic_DNA"/>
</dbReference>
<dbReference type="RefSeq" id="WP_002990220.1">
    <property type="nucleotide sequence ID" value="NC_003485.1"/>
</dbReference>
<dbReference type="SMR" id="Q8P1F2"/>
<dbReference type="KEGG" id="spm:spyM18_0909"/>
<dbReference type="HOGENOM" id="CLU_031864_5_5_9"/>
<dbReference type="GO" id="GO:0004324">
    <property type="term" value="F:ferredoxin-NADP+ reductase activity"/>
    <property type="evidence" value="ECO:0007669"/>
    <property type="project" value="UniProtKB-UniRule"/>
</dbReference>
<dbReference type="GO" id="GO:0050660">
    <property type="term" value="F:flavin adenine dinucleotide binding"/>
    <property type="evidence" value="ECO:0007669"/>
    <property type="project" value="UniProtKB-UniRule"/>
</dbReference>
<dbReference type="GO" id="GO:0050661">
    <property type="term" value="F:NADP binding"/>
    <property type="evidence" value="ECO:0007669"/>
    <property type="project" value="UniProtKB-UniRule"/>
</dbReference>
<dbReference type="Gene3D" id="3.50.50.60">
    <property type="entry name" value="FAD/NAD(P)-binding domain"/>
    <property type="match status" value="2"/>
</dbReference>
<dbReference type="HAMAP" id="MF_01685">
    <property type="entry name" value="FENR2"/>
    <property type="match status" value="1"/>
</dbReference>
<dbReference type="InterPro" id="IPR036188">
    <property type="entry name" value="FAD/NAD-bd_sf"/>
</dbReference>
<dbReference type="InterPro" id="IPR023753">
    <property type="entry name" value="FAD/NAD-binding_dom"/>
</dbReference>
<dbReference type="InterPro" id="IPR022890">
    <property type="entry name" value="Fd--NADP_Rdtase_type_2"/>
</dbReference>
<dbReference type="InterPro" id="IPR050097">
    <property type="entry name" value="Ferredoxin-NADP_redctase_2"/>
</dbReference>
<dbReference type="PANTHER" id="PTHR48105">
    <property type="entry name" value="THIOREDOXIN REDUCTASE 1-RELATED-RELATED"/>
    <property type="match status" value="1"/>
</dbReference>
<dbReference type="Pfam" id="PF07992">
    <property type="entry name" value="Pyr_redox_2"/>
    <property type="match status" value="1"/>
</dbReference>
<dbReference type="PRINTS" id="PR00368">
    <property type="entry name" value="FADPNR"/>
</dbReference>
<dbReference type="PRINTS" id="PR00469">
    <property type="entry name" value="PNDRDTASEII"/>
</dbReference>
<dbReference type="SUPFAM" id="SSF51905">
    <property type="entry name" value="FAD/NAD(P)-binding domain"/>
    <property type="match status" value="1"/>
</dbReference>
<comment type="catalytic activity">
    <reaction evidence="1">
        <text>2 reduced [2Fe-2S]-[ferredoxin] + NADP(+) + H(+) = 2 oxidized [2Fe-2S]-[ferredoxin] + NADPH</text>
        <dbReference type="Rhea" id="RHEA:20125"/>
        <dbReference type="Rhea" id="RHEA-COMP:10000"/>
        <dbReference type="Rhea" id="RHEA-COMP:10001"/>
        <dbReference type="ChEBI" id="CHEBI:15378"/>
        <dbReference type="ChEBI" id="CHEBI:33737"/>
        <dbReference type="ChEBI" id="CHEBI:33738"/>
        <dbReference type="ChEBI" id="CHEBI:57783"/>
        <dbReference type="ChEBI" id="CHEBI:58349"/>
        <dbReference type="EC" id="1.18.1.2"/>
    </reaction>
</comment>
<comment type="cofactor">
    <cofactor evidence="1">
        <name>FAD</name>
        <dbReference type="ChEBI" id="CHEBI:57692"/>
    </cofactor>
    <text evidence="1">Binds 1 FAD per subunit.</text>
</comment>
<comment type="subunit">
    <text evidence="1">Homodimer.</text>
</comment>
<comment type="similarity">
    <text evidence="1">Belongs to the ferredoxin--NADP reductase type 2 family.</text>
</comment>
<evidence type="ECO:0000255" key="1">
    <source>
        <dbReference type="HAMAP-Rule" id="MF_01685"/>
    </source>
</evidence>
<sequence length="330" mass="36148">MKDKAYDITIIGGGPIGLFAAFYAGLRGVTVKIIESLSELGGQPAILYPEKMIYDIPAYPSLTGVELTENLIKQLSRFEDRTTICLKEEVLTFDKVKGGFSIRTNKAEHFSKAIIIACGNGAFAPRTLGLESEENFADHNLFYNVHQLDQFAGQKVVICGGGDSAVDWALALEDIAESVTVVHRRDAFRAHEHSVELLKTSTVNLLTPYVPKALKGIGNLAEKLVIQKVKEDEVLELELDSLIVSFGFSTSNKNLKNWNLDYKRSSITVSPLFQTSQEGIFAIGDAAAYNGKVDLIATGFGEAPTAVNQAINYIYPDRDNRVVHSTSLID</sequence>
<feature type="chain" id="PRO_0000364965" description="Ferredoxin--NADP reductase">
    <location>
        <begin position="1"/>
        <end position="330"/>
    </location>
</feature>
<feature type="binding site" evidence="1">
    <location>
        <position position="35"/>
    </location>
    <ligand>
        <name>FAD</name>
        <dbReference type="ChEBI" id="CHEBI:57692"/>
    </ligand>
</feature>
<feature type="binding site" evidence="1">
    <location>
        <position position="43"/>
    </location>
    <ligand>
        <name>FAD</name>
        <dbReference type="ChEBI" id="CHEBI:57692"/>
    </ligand>
</feature>
<feature type="binding site" evidence="1">
    <location>
        <position position="48"/>
    </location>
    <ligand>
        <name>FAD</name>
        <dbReference type="ChEBI" id="CHEBI:57692"/>
    </ligand>
</feature>
<feature type="binding site" evidence="1">
    <location>
        <position position="90"/>
    </location>
    <ligand>
        <name>FAD</name>
        <dbReference type="ChEBI" id="CHEBI:57692"/>
    </ligand>
</feature>
<feature type="binding site" evidence="1">
    <location>
        <position position="123"/>
    </location>
    <ligand>
        <name>FAD</name>
        <dbReference type="ChEBI" id="CHEBI:57692"/>
    </ligand>
</feature>
<feature type="binding site" evidence="1">
    <location>
        <position position="285"/>
    </location>
    <ligand>
        <name>FAD</name>
        <dbReference type="ChEBI" id="CHEBI:57692"/>
    </ligand>
</feature>
<feature type="binding site" evidence="1">
    <location>
        <position position="326"/>
    </location>
    <ligand>
        <name>FAD</name>
        <dbReference type="ChEBI" id="CHEBI:57692"/>
    </ligand>
</feature>
<name>FENR_STRP8</name>
<gene>
    <name type="ordered locus">spyM18_0909</name>
</gene>
<keyword id="KW-0274">FAD</keyword>
<keyword id="KW-0285">Flavoprotein</keyword>
<keyword id="KW-0521">NADP</keyword>
<keyword id="KW-0560">Oxidoreductase</keyword>
<proteinExistence type="inferred from homology"/>
<accession>Q8P1F2</accession>
<organism>
    <name type="scientific">Streptococcus pyogenes serotype M18 (strain MGAS8232)</name>
    <dbReference type="NCBI Taxonomy" id="186103"/>
    <lineage>
        <taxon>Bacteria</taxon>
        <taxon>Bacillati</taxon>
        <taxon>Bacillota</taxon>
        <taxon>Bacilli</taxon>
        <taxon>Lactobacillales</taxon>
        <taxon>Streptococcaceae</taxon>
        <taxon>Streptococcus</taxon>
    </lineage>
</organism>